<name>RL27_CARHZ</name>
<keyword id="KW-1185">Reference proteome</keyword>
<keyword id="KW-0687">Ribonucleoprotein</keyword>
<keyword id="KW-0689">Ribosomal protein</keyword>
<dbReference type="EMBL" id="CP000141">
    <property type="protein sequence ID" value="ABB15353.1"/>
    <property type="molecule type" value="Genomic_DNA"/>
</dbReference>
<dbReference type="RefSeq" id="WP_011343307.1">
    <property type="nucleotide sequence ID" value="NC_007503.1"/>
</dbReference>
<dbReference type="SMR" id="Q3AF53"/>
<dbReference type="FunCoup" id="Q3AF53">
    <property type="interactions" value="396"/>
</dbReference>
<dbReference type="STRING" id="246194.CHY_0368"/>
<dbReference type="KEGG" id="chy:CHY_0368"/>
<dbReference type="eggNOG" id="COG0211">
    <property type="taxonomic scope" value="Bacteria"/>
</dbReference>
<dbReference type="HOGENOM" id="CLU_095424_4_0_9"/>
<dbReference type="InParanoid" id="Q3AF53"/>
<dbReference type="OrthoDB" id="9803474at2"/>
<dbReference type="Proteomes" id="UP000002706">
    <property type="component" value="Chromosome"/>
</dbReference>
<dbReference type="GO" id="GO:0022625">
    <property type="term" value="C:cytosolic large ribosomal subunit"/>
    <property type="evidence" value="ECO:0007669"/>
    <property type="project" value="TreeGrafter"/>
</dbReference>
<dbReference type="GO" id="GO:0003735">
    <property type="term" value="F:structural constituent of ribosome"/>
    <property type="evidence" value="ECO:0007669"/>
    <property type="project" value="InterPro"/>
</dbReference>
<dbReference type="GO" id="GO:0006412">
    <property type="term" value="P:translation"/>
    <property type="evidence" value="ECO:0007669"/>
    <property type="project" value="UniProtKB-UniRule"/>
</dbReference>
<dbReference type="FunFam" id="2.40.50.100:FF:000004">
    <property type="entry name" value="50S ribosomal protein L27"/>
    <property type="match status" value="1"/>
</dbReference>
<dbReference type="Gene3D" id="2.40.50.100">
    <property type="match status" value="1"/>
</dbReference>
<dbReference type="HAMAP" id="MF_00539">
    <property type="entry name" value="Ribosomal_bL27"/>
    <property type="match status" value="1"/>
</dbReference>
<dbReference type="InterPro" id="IPR001684">
    <property type="entry name" value="Ribosomal_bL27"/>
</dbReference>
<dbReference type="InterPro" id="IPR018261">
    <property type="entry name" value="Ribosomal_bL27_CS"/>
</dbReference>
<dbReference type="NCBIfam" id="TIGR00062">
    <property type="entry name" value="L27"/>
    <property type="match status" value="1"/>
</dbReference>
<dbReference type="PANTHER" id="PTHR15893:SF0">
    <property type="entry name" value="LARGE RIBOSOMAL SUBUNIT PROTEIN BL27M"/>
    <property type="match status" value="1"/>
</dbReference>
<dbReference type="PANTHER" id="PTHR15893">
    <property type="entry name" value="RIBOSOMAL PROTEIN L27"/>
    <property type="match status" value="1"/>
</dbReference>
<dbReference type="Pfam" id="PF01016">
    <property type="entry name" value="Ribosomal_L27"/>
    <property type="match status" value="1"/>
</dbReference>
<dbReference type="PRINTS" id="PR00063">
    <property type="entry name" value="RIBOSOMALL27"/>
</dbReference>
<dbReference type="SUPFAM" id="SSF110324">
    <property type="entry name" value="Ribosomal L27 protein-like"/>
    <property type="match status" value="1"/>
</dbReference>
<dbReference type="PROSITE" id="PS00831">
    <property type="entry name" value="RIBOSOMAL_L27"/>
    <property type="match status" value="1"/>
</dbReference>
<sequence>MAHKKGVGSSKNGRDSKAKRLGVKRYAGQFVTAGSILVRQRGTKFHPGNNVGIGGDDTLFAKIDGYVVFERKGKNKKQVSVYPQNVAI</sequence>
<evidence type="ECO:0000255" key="1">
    <source>
        <dbReference type="HAMAP-Rule" id="MF_00539"/>
    </source>
</evidence>
<evidence type="ECO:0000305" key="2"/>
<gene>
    <name evidence="1" type="primary">rpmA</name>
    <name type="ordered locus">CHY_0368</name>
</gene>
<feature type="chain" id="PRO_1000128711" description="Large ribosomal subunit protein bL27">
    <location>
        <begin position="1"/>
        <end position="88"/>
    </location>
</feature>
<proteinExistence type="inferred from homology"/>
<protein>
    <recommendedName>
        <fullName evidence="1">Large ribosomal subunit protein bL27</fullName>
    </recommendedName>
    <alternativeName>
        <fullName evidence="2">50S ribosomal protein L27</fullName>
    </alternativeName>
</protein>
<organism>
    <name type="scientific">Carboxydothermus hydrogenoformans (strain ATCC BAA-161 / DSM 6008 / Z-2901)</name>
    <dbReference type="NCBI Taxonomy" id="246194"/>
    <lineage>
        <taxon>Bacteria</taxon>
        <taxon>Bacillati</taxon>
        <taxon>Bacillota</taxon>
        <taxon>Clostridia</taxon>
        <taxon>Thermoanaerobacterales</taxon>
        <taxon>Thermoanaerobacteraceae</taxon>
        <taxon>Carboxydothermus</taxon>
    </lineage>
</organism>
<accession>Q3AF53</accession>
<comment type="similarity">
    <text evidence="1">Belongs to the bacterial ribosomal protein bL27 family.</text>
</comment>
<reference key="1">
    <citation type="journal article" date="2005" name="PLoS Genet.">
        <title>Life in hot carbon monoxide: the complete genome sequence of Carboxydothermus hydrogenoformans Z-2901.</title>
        <authorList>
            <person name="Wu M."/>
            <person name="Ren Q."/>
            <person name="Durkin A.S."/>
            <person name="Daugherty S.C."/>
            <person name="Brinkac L.M."/>
            <person name="Dodson R.J."/>
            <person name="Madupu R."/>
            <person name="Sullivan S.A."/>
            <person name="Kolonay J.F."/>
            <person name="Nelson W.C."/>
            <person name="Tallon L.J."/>
            <person name="Jones K.M."/>
            <person name="Ulrich L.E."/>
            <person name="Gonzalez J.M."/>
            <person name="Zhulin I.B."/>
            <person name="Robb F.T."/>
            <person name="Eisen J.A."/>
        </authorList>
    </citation>
    <scope>NUCLEOTIDE SEQUENCE [LARGE SCALE GENOMIC DNA]</scope>
    <source>
        <strain>ATCC BAA-161 / DSM 6008 / Z-2901</strain>
    </source>
</reference>